<gene>
    <name evidence="1" type="primary">rpl20</name>
</gene>
<accession>Q33C09</accession>
<organism>
    <name type="scientific">Nicotiana tomentosiformis</name>
    <name type="common">Tobacco</name>
    <dbReference type="NCBI Taxonomy" id="4098"/>
    <lineage>
        <taxon>Eukaryota</taxon>
        <taxon>Viridiplantae</taxon>
        <taxon>Streptophyta</taxon>
        <taxon>Embryophyta</taxon>
        <taxon>Tracheophyta</taxon>
        <taxon>Spermatophyta</taxon>
        <taxon>Magnoliopsida</taxon>
        <taxon>eudicotyledons</taxon>
        <taxon>Gunneridae</taxon>
        <taxon>Pentapetalae</taxon>
        <taxon>asterids</taxon>
        <taxon>lamiids</taxon>
        <taxon>Solanales</taxon>
        <taxon>Solanaceae</taxon>
        <taxon>Nicotianoideae</taxon>
        <taxon>Nicotianeae</taxon>
        <taxon>Nicotiana</taxon>
    </lineage>
</organism>
<reference key="1">
    <citation type="journal article" date="2006" name="Mol. Genet. Genomics">
        <title>The chloroplast genome of Nicotiana sylvestris and Nicotiana tomentosiformis: complete sequencing confirms that the Nicotiana sylvestris progenitor is the maternal genome donor of Nicotiana tabacum.</title>
        <authorList>
            <person name="Yukawa M."/>
            <person name="Tsudzuki T."/>
            <person name="Sugiura M."/>
        </authorList>
    </citation>
    <scope>NUCLEOTIDE SEQUENCE [LARGE SCALE GENOMIC DNA]</scope>
</reference>
<evidence type="ECO:0000255" key="1">
    <source>
        <dbReference type="HAMAP-Rule" id="MF_00382"/>
    </source>
</evidence>
<evidence type="ECO:0000305" key="2"/>
<dbReference type="EMBL" id="AB240139">
    <property type="protein sequence ID" value="BAE48026.1"/>
    <property type="molecule type" value="Genomic_DNA"/>
</dbReference>
<dbReference type="RefSeq" id="YP_398888.1">
    <property type="nucleotide sequence ID" value="NC_007602.1"/>
</dbReference>
<dbReference type="SMR" id="Q33C09"/>
<dbReference type="GeneID" id="3776293"/>
<dbReference type="KEGG" id="nto:3776293"/>
<dbReference type="OrthoDB" id="10251781at2759"/>
<dbReference type="GO" id="GO:0009507">
    <property type="term" value="C:chloroplast"/>
    <property type="evidence" value="ECO:0007669"/>
    <property type="project" value="UniProtKB-SubCell"/>
</dbReference>
<dbReference type="GO" id="GO:1990904">
    <property type="term" value="C:ribonucleoprotein complex"/>
    <property type="evidence" value="ECO:0007669"/>
    <property type="project" value="UniProtKB-KW"/>
</dbReference>
<dbReference type="GO" id="GO:0005840">
    <property type="term" value="C:ribosome"/>
    <property type="evidence" value="ECO:0007669"/>
    <property type="project" value="UniProtKB-KW"/>
</dbReference>
<dbReference type="GO" id="GO:0019843">
    <property type="term" value="F:rRNA binding"/>
    <property type="evidence" value="ECO:0007669"/>
    <property type="project" value="UniProtKB-UniRule"/>
</dbReference>
<dbReference type="GO" id="GO:0003735">
    <property type="term" value="F:structural constituent of ribosome"/>
    <property type="evidence" value="ECO:0007669"/>
    <property type="project" value="InterPro"/>
</dbReference>
<dbReference type="GO" id="GO:0000027">
    <property type="term" value="P:ribosomal large subunit assembly"/>
    <property type="evidence" value="ECO:0007669"/>
    <property type="project" value="UniProtKB-UniRule"/>
</dbReference>
<dbReference type="GO" id="GO:0006412">
    <property type="term" value="P:translation"/>
    <property type="evidence" value="ECO:0007669"/>
    <property type="project" value="InterPro"/>
</dbReference>
<dbReference type="CDD" id="cd07026">
    <property type="entry name" value="Ribosomal_L20"/>
    <property type="match status" value="1"/>
</dbReference>
<dbReference type="FunFam" id="1.10.1900.20:FF:000001">
    <property type="entry name" value="50S ribosomal protein L20"/>
    <property type="match status" value="1"/>
</dbReference>
<dbReference type="Gene3D" id="6.10.160.10">
    <property type="match status" value="1"/>
</dbReference>
<dbReference type="Gene3D" id="1.10.1900.20">
    <property type="entry name" value="Ribosomal protein L20"/>
    <property type="match status" value="1"/>
</dbReference>
<dbReference type="HAMAP" id="MF_00382">
    <property type="entry name" value="Ribosomal_bL20"/>
    <property type="match status" value="1"/>
</dbReference>
<dbReference type="InterPro" id="IPR005813">
    <property type="entry name" value="Ribosomal_bL20"/>
</dbReference>
<dbReference type="InterPro" id="IPR049946">
    <property type="entry name" value="RIBOSOMAL_L20_CS"/>
</dbReference>
<dbReference type="InterPro" id="IPR035566">
    <property type="entry name" value="Ribosomal_protein_bL20_C"/>
</dbReference>
<dbReference type="NCBIfam" id="TIGR01032">
    <property type="entry name" value="rplT_bact"/>
    <property type="match status" value="1"/>
</dbReference>
<dbReference type="PANTHER" id="PTHR10986">
    <property type="entry name" value="39S RIBOSOMAL PROTEIN L20"/>
    <property type="match status" value="1"/>
</dbReference>
<dbReference type="Pfam" id="PF00453">
    <property type="entry name" value="Ribosomal_L20"/>
    <property type="match status" value="1"/>
</dbReference>
<dbReference type="PRINTS" id="PR00062">
    <property type="entry name" value="RIBOSOMALL20"/>
</dbReference>
<dbReference type="SUPFAM" id="SSF74731">
    <property type="entry name" value="Ribosomal protein L20"/>
    <property type="match status" value="1"/>
</dbReference>
<dbReference type="PROSITE" id="PS00937">
    <property type="entry name" value="RIBOSOMAL_L20"/>
    <property type="match status" value="1"/>
</dbReference>
<feature type="chain" id="PRO_0000276417" description="Large ribosomal subunit protein bL20c">
    <location>
        <begin position="1"/>
        <end position="128"/>
    </location>
</feature>
<sequence>MTRIKRGYIARRRRTKIRLFASSFRGAHSRLTRTITQQKIRALVSAHRDRDRKKRDFRRLWITRINAVIRERGVSYSYSRLIHDLYKRQLLLNRKILAQIAISNRNCLYMISNEIIKEVDWKESTRII</sequence>
<protein>
    <recommendedName>
        <fullName evidence="1">Large ribosomal subunit protein bL20c</fullName>
    </recommendedName>
    <alternativeName>
        <fullName evidence="2">50S ribosomal protein L20, chloroplastic</fullName>
    </alternativeName>
</protein>
<geneLocation type="chloroplast"/>
<comment type="function">
    <text evidence="1">Binds directly to 23S ribosomal RNA and is necessary for the in vitro assembly process of the 50S ribosomal subunit. It is not involved in the protein synthesizing functions of that subunit.</text>
</comment>
<comment type="subcellular location">
    <subcellularLocation>
        <location>Plastid</location>
        <location>Chloroplast</location>
    </subcellularLocation>
</comment>
<comment type="similarity">
    <text evidence="1">Belongs to the bacterial ribosomal protein bL20 family.</text>
</comment>
<name>RK20_NICTO</name>
<keyword id="KW-0150">Chloroplast</keyword>
<keyword id="KW-0934">Plastid</keyword>
<keyword id="KW-0687">Ribonucleoprotein</keyword>
<keyword id="KW-0689">Ribosomal protein</keyword>
<keyword id="KW-0694">RNA-binding</keyword>
<keyword id="KW-0699">rRNA-binding</keyword>
<proteinExistence type="inferred from homology"/>